<keyword id="KW-0012">Acyltransferase</keyword>
<keyword id="KW-0808">Transferase</keyword>
<sequence length="496" mass="55032">MPSISTDFDVRPYEDVPAQTIALSVPDAAAPKHCPIQLLFWPVDGKSSFTRGYENLKEGLSRLLSDVPVLAGKLERGWKGDSRYLAVNISSDASVEFVYEDVSAEDIIPSYDNLAQNGFPTTGFRDILSPKMSLGPMVEGSPMMCAKLNMIKGGAILAYGFSHVLADGWANSELGRLWALHAAQVSQGIEFKKHKDATPDEDIRRRLSTLPEYDTDVPLDAFLQITPSEEATNFLHKDVLSAEKAKKKAREKMMATLLAAGEVPELPRFTFWRFTPEKLKELKQAAAGSDPDKWISTMDALAGLFWSRIALIQGQSSNGHQQSRCIFALDIRRRLQPPVPLGYIGNVFSPVDALCPLDELESDSLGLKAAAQSMRQANKGWAQSRWEAWLNKIMSLPLDQTLDTSQEFRLQKHNMYFNDYSAFQLNTASWGAPFGQPTRTRCLRSGLSGGAAGVWVCPKLPDGSLEVWLTSTAALQKSLFEDTMFNHYAEFVCQHT</sequence>
<reference key="1">
    <citation type="journal article" date="2017" name="Org. Lett.">
        <title>Identification and heterologous production of a benzoyl-primed tricarboxylic acid polyketide intermediate from the zaragozic acid A biosynthetic pathway.</title>
        <authorList>
            <person name="Liu N."/>
            <person name="Hung Y.S."/>
            <person name="Gao S.S."/>
            <person name="Hang L."/>
            <person name="Zou Y."/>
            <person name="Chooi Y.H."/>
            <person name="Tang Y."/>
        </authorList>
    </citation>
    <scope>NUCLEOTIDE SEQUENCE [GENOMIC DNA]</scope>
    <scope>FUNCTION</scope>
    <scope>PATHWAY</scope>
    <source>
        <strain>ATCC 74067</strain>
    </source>
</reference>
<evidence type="ECO:0000250" key="1">
    <source>
        <dbReference type="UniProtKB" id="A0A3G1DJI9"/>
    </source>
</evidence>
<evidence type="ECO:0000250" key="2">
    <source>
        <dbReference type="UniProtKB" id="Q70PR7"/>
    </source>
</evidence>
<evidence type="ECO:0000269" key="3">
    <source>
    </source>
</evidence>
<evidence type="ECO:0000303" key="4">
    <source>
    </source>
</evidence>
<evidence type="ECO:0000305" key="5"/>
<evidence type="ECO:0000305" key="6">
    <source>
    </source>
</evidence>
<protein>
    <recommendedName>
        <fullName evidence="4">Acyltransferase clz6</fullName>
        <shortName evidence="4">AT clz6</shortName>
        <ecNumber evidence="6">2.3.1.-</ecNumber>
    </recommendedName>
    <alternativeName>
        <fullName evidence="4">Squalestatin S1 biosynthesis cluster protein clz6</fullName>
    </alternativeName>
    <alternativeName>
        <fullName evidence="4">Zaragozic acid A biosynthesis cluster protein 6</fullName>
    </alternativeName>
</protein>
<name>CLZ6_COCLU</name>
<feature type="chain" id="PRO_0000452631" description="Acyltransferase clz6">
    <location>
        <begin position="1"/>
        <end position="496"/>
    </location>
</feature>
<feature type="active site" description="Proton acceptor" evidence="2">
    <location>
        <position position="163"/>
    </location>
</feature>
<accession>A0A345BJP2</accession>
<organism>
    <name type="scientific">Cochliobolus lunatus</name>
    <name type="common">Filamentous fungus</name>
    <name type="synonym">Curvularia lunata</name>
    <dbReference type="NCBI Taxonomy" id="5503"/>
    <lineage>
        <taxon>Eukaryota</taxon>
        <taxon>Fungi</taxon>
        <taxon>Dikarya</taxon>
        <taxon>Ascomycota</taxon>
        <taxon>Pezizomycotina</taxon>
        <taxon>Dothideomycetes</taxon>
        <taxon>Pleosporomycetidae</taxon>
        <taxon>Pleosporales</taxon>
        <taxon>Pleosporineae</taxon>
        <taxon>Pleosporaceae</taxon>
        <taxon>Curvularia</taxon>
    </lineage>
</organism>
<dbReference type="EC" id="2.3.1.-" evidence="6"/>
<dbReference type="EMBL" id="MF806533">
    <property type="protein sequence ID" value="AXF50655.1"/>
    <property type="molecule type" value="Genomic_DNA"/>
</dbReference>
<dbReference type="SMR" id="A0A345BJP2"/>
<dbReference type="GO" id="GO:0016747">
    <property type="term" value="F:acyltransferase activity, transferring groups other than amino-acyl groups"/>
    <property type="evidence" value="ECO:0007669"/>
    <property type="project" value="TreeGrafter"/>
</dbReference>
<dbReference type="Gene3D" id="3.30.559.10">
    <property type="entry name" value="Chloramphenicol acetyltransferase-like domain"/>
    <property type="match status" value="2"/>
</dbReference>
<dbReference type="InterPro" id="IPR023213">
    <property type="entry name" value="CAT-like_dom_sf"/>
</dbReference>
<dbReference type="InterPro" id="IPR050317">
    <property type="entry name" value="Plant_Fungal_Acyltransferase"/>
</dbReference>
<dbReference type="PANTHER" id="PTHR31642:SF310">
    <property type="entry name" value="FATTY ALCOHOL:CAFFEOYL-COA ACYLTRANSFERASE"/>
    <property type="match status" value="1"/>
</dbReference>
<dbReference type="PANTHER" id="PTHR31642">
    <property type="entry name" value="TRICHOTHECENE 3-O-ACETYLTRANSFERASE"/>
    <property type="match status" value="1"/>
</dbReference>
<dbReference type="Pfam" id="PF02458">
    <property type="entry name" value="Transferase"/>
    <property type="match status" value="1"/>
</dbReference>
<proteinExistence type="inferred from homology"/>
<comment type="function">
    <text evidence="1 3 6">Acyltransferase; part of the gene cluster that mediates the biosynthesis of squalestatin S1 (SQS1, also known as zaragozic acid A), a heavily oxidized fungal polyketide that offers potent cholesterol lowering activity by targeting squalene synthase (SS) (PubMed:28605916). SQS1 is composed of a 2,8-dioxobicyclic[3.2.1]octane-3,4,5-tricarboxyclic acid core that is connected to two lipophilic polyketide arms (PubMed:28605916). These initial steps feature the priming of an unusual benzoic acid starter unit onto the highly reducing polyketide synthase clz14, followed by oxaloacetate extension and product release to generate a tricarboxylic acid containing product (PubMed:28605916). The phenylalanine ammonia lyase (PAL) clz10 and the acyl-CoA ligase clz12 are involved in transforming phenylalanine into benzoyl-CoA (PubMed:28605916). The citrate synthase-like protein clz17 is involved in connecting the C-alpha-carbons of the hexaketide chain and oxaloacetate to afford the tricarboxylic acid unit (PubMed:28605916). The potential hydrolytic enzymes, clz11 and clz13, are in close proximity to pks2 and may participate in product release (PubMed:28605916). On the other side, the tetraketide arm is synthesized by a the squalestatin tetraketide synthase clz2 and enzymatically esterified to the core in the last biosynthetic step, by the acetyltransferase clz6 (By similarity). The biosynthesis of the tetraketide must involve 3 rounds of chain extension (By similarity). After the first and second rounds methyl-transfer occurs, and in all rounds of extension the ketoreductase and dehydratase are active (By similarity). The enoyl reductase and C-MeT of clz2 are not active in the final round of extension (By similarity). The acetyltransferase clz6 appears to have a broad substrate selectivity for its acyl CoA substrate, allowing the in vitro synthesis of novel squalestatins (By similarity). The biosynthesis of SQS1 requires several oxidative steps likely performed by oxidoreductases clz3, clz15 and clz16 (Probable). Finally, in support of the identification of the cluster as being responsible for SQS1 production, the cluster contains a gene encoding a putative squalene synthase (SS) clz20, suggesting a likely mechanism for self-resistance (Probable).</text>
</comment>
<comment type="pathway">
    <text evidence="6">Secondary metabolite biosynthesis.</text>
</comment>
<comment type="subunit">
    <text evidence="2">Monomer.</text>
</comment>
<comment type="similarity">
    <text evidence="5">Belongs to the plant acyltransferase family.</text>
</comment>
<gene>
    <name evidence="4" type="primary">clz6</name>
</gene>